<dbReference type="EMBL" id="AB010693">
    <property type="protein sequence ID" value="BAB10878.1"/>
    <property type="molecule type" value="Genomic_DNA"/>
</dbReference>
<dbReference type="EMBL" id="CP002688">
    <property type="protein sequence ID" value="AED95179.1"/>
    <property type="molecule type" value="Genomic_DNA"/>
</dbReference>
<dbReference type="RefSeq" id="NP_199308.1">
    <property type="nucleotide sequence ID" value="NM_123863.1"/>
</dbReference>
<dbReference type="FunCoup" id="Q9FLA2">
    <property type="interactions" value="3"/>
</dbReference>
<dbReference type="PaxDb" id="3702-AT5G44950.1"/>
<dbReference type="EnsemblPlants" id="AT5G44950.1">
    <property type="protein sequence ID" value="AT5G44950.1"/>
    <property type="gene ID" value="AT5G44950"/>
</dbReference>
<dbReference type="GeneID" id="834526"/>
<dbReference type="Gramene" id="AT5G44950.1">
    <property type="protein sequence ID" value="AT5G44950.1"/>
    <property type="gene ID" value="AT5G44950"/>
</dbReference>
<dbReference type="KEGG" id="ath:AT5G44950"/>
<dbReference type="Araport" id="AT5G44950"/>
<dbReference type="TAIR" id="AT5G44950"/>
<dbReference type="HOGENOM" id="CLU_010721_1_3_1"/>
<dbReference type="InParanoid" id="Q9FLA2"/>
<dbReference type="OMA" id="FPISEWI"/>
<dbReference type="PhylomeDB" id="Q9FLA2"/>
<dbReference type="PRO" id="PR:Q9FLA2"/>
<dbReference type="Proteomes" id="UP000006548">
    <property type="component" value="Chromosome 5"/>
</dbReference>
<dbReference type="ExpressionAtlas" id="Q9FLA2">
    <property type="expression patterns" value="baseline"/>
</dbReference>
<dbReference type="CDD" id="cd22160">
    <property type="entry name" value="F-box_AtFBL13-like"/>
    <property type="match status" value="1"/>
</dbReference>
<dbReference type="Gene3D" id="1.20.1280.50">
    <property type="match status" value="1"/>
</dbReference>
<dbReference type="Gene3D" id="3.80.10.10">
    <property type="entry name" value="Ribonuclease Inhibitor"/>
    <property type="match status" value="1"/>
</dbReference>
<dbReference type="InterPro" id="IPR036047">
    <property type="entry name" value="F-box-like_dom_sf"/>
</dbReference>
<dbReference type="InterPro" id="IPR053781">
    <property type="entry name" value="F-box_AtFBL13-like"/>
</dbReference>
<dbReference type="InterPro" id="IPR001810">
    <property type="entry name" value="F-box_dom"/>
</dbReference>
<dbReference type="InterPro" id="IPR006566">
    <property type="entry name" value="FBD"/>
</dbReference>
<dbReference type="InterPro" id="IPR050232">
    <property type="entry name" value="FBL13/AtMIF1-like"/>
</dbReference>
<dbReference type="InterPro" id="IPR032675">
    <property type="entry name" value="LRR_dom_sf"/>
</dbReference>
<dbReference type="InterPro" id="IPR055411">
    <property type="entry name" value="LRR_FXL15/At3g58940/PEG3-like"/>
</dbReference>
<dbReference type="PANTHER" id="PTHR31900">
    <property type="entry name" value="F-BOX/RNI SUPERFAMILY PROTEIN-RELATED"/>
    <property type="match status" value="1"/>
</dbReference>
<dbReference type="PANTHER" id="PTHR31900:SF33">
    <property type="entry name" value="PROTEIN WITH RNI-LIKE_FBD-LIKE DOMAIN"/>
    <property type="match status" value="1"/>
</dbReference>
<dbReference type="Pfam" id="PF00646">
    <property type="entry name" value="F-box"/>
    <property type="match status" value="1"/>
</dbReference>
<dbReference type="Pfam" id="PF08387">
    <property type="entry name" value="FBD"/>
    <property type="match status" value="1"/>
</dbReference>
<dbReference type="Pfam" id="PF24758">
    <property type="entry name" value="LRR_At5g56370"/>
    <property type="match status" value="1"/>
</dbReference>
<dbReference type="SMART" id="SM00579">
    <property type="entry name" value="FBD"/>
    <property type="match status" value="1"/>
</dbReference>
<dbReference type="SUPFAM" id="SSF81383">
    <property type="entry name" value="F-box domain"/>
    <property type="match status" value="1"/>
</dbReference>
<dbReference type="SUPFAM" id="SSF52047">
    <property type="entry name" value="RNI-like"/>
    <property type="match status" value="1"/>
</dbReference>
<dbReference type="PROSITE" id="PS50181">
    <property type="entry name" value="FBOX"/>
    <property type="match status" value="1"/>
</dbReference>
<keyword id="KW-0433">Leucine-rich repeat</keyword>
<keyword id="KW-1185">Reference proteome</keyword>
<keyword id="KW-0677">Repeat</keyword>
<accession>Q9FLA2</accession>
<organism>
    <name type="scientific">Arabidopsis thaliana</name>
    <name type="common">Mouse-ear cress</name>
    <dbReference type="NCBI Taxonomy" id="3702"/>
    <lineage>
        <taxon>Eukaryota</taxon>
        <taxon>Viridiplantae</taxon>
        <taxon>Streptophyta</taxon>
        <taxon>Embryophyta</taxon>
        <taxon>Tracheophyta</taxon>
        <taxon>Spermatophyta</taxon>
        <taxon>Magnoliopsida</taxon>
        <taxon>eudicotyledons</taxon>
        <taxon>Gunneridae</taxon>
        <taxon>Pentapetalae</taxon>
        <taxon>rosids</taxon>
        <taxon>malvids</taxon>
        <taxon>Brassicales</taxon>
        <taxon>Brassicaceae</taxon>
        <taxon>Camelineae</taxon>
        <taxon>Arabidopsis</taxon>
    </lineage>
</organism>
<sequence>MGRDRISELPDGLLNHILMYLHIEESIRTSVLSSRWRKLWLKVPGLDVNVHDFPADGNLFESLMDKFLEVNRGRLQNFKLNYESNLYYLMDRFVPWIATVVDRGIQHLDVTATDCPPWTIDFMPANICKSKTLVSLKLVNVGLDTPKFVVSLPCLKIMHLEDIFYSPLIAENLISGCPVLEDLTIVRNHEDFLNFLRVMSQTLKNFRLTFDWGMGSNDFSVEIDAPGLKYMSFRDSQSDRIVVKNLSSLVKIDLDTEFNLKFGLGSPLEPEDLTKRDIIRDFLTGISSVKHMIISHPTLEVLYRYSKIGQLPKFHNLYHLQAVFSSSLLQLLPAFLEICPNLKNLILDYSISAEPEQIDFTNLPRCLISTLEYVEIKQLTMREESGIKLVKYFLENSAVLKKLTLSFIDSPMTNQESEIYMQLLTSTKRSRGCHVLIL</sequence>
<evidence type="ECO:0000255" key="1">
    <source>
        <dbReference type="PROSITE-ProRule" id="PRU00080"/>
    </source>
</evidence>
<proteinExistence type="predicted"/>
<protein>
    <recommendedName>
        <fullName>Putative F-box/FBD/LRR-repeat protein At5g44950</fullName>
    </recommendedName>
</protein>
<reference key="1">
    <citation type="journal article" date="1998" name="DNA Res.">
        <title>Structural analysis of Arabidopsis thaliana chromosome 5. V. Sequence features of the regions of 1,381,565 bp covered by twenty one physically assigned P1 and TAC clones.</title>
        <authorList>
            <person name="Kaneko T."/>
            <person name="Kotani H."/>
            <person name="Nakamura Y."/>
            <person name="Sato S."/>
            <person name="Asamizu E."/>
            <person name="Miyajima N."/>
            <person name="Tabata S."/>
        </authorList>
    </citation>
    <scope>NUCLEOTIDE SEQUENCE [LARGE SCALE GENOMIC DNA]</scope>
    <source>
        <strain>cv. Columbia</strain>
    </source>
</reference>
<reference key="2">
    <citation type="journal article" date="2017" name="Plant J.">
        <title>Araport11: a complete reannotation of the Arabidopsis thaliana reference genome.</title>
        <authorList>
            <person name="Cheng C.Y."/>
            <person name="Krishnakumar V."/>
            <person name="Chan A.P."/>
            <person name="Thibaud-Nissen F."/>
            <person name="Schobel S."/>
            <person name="Town C.D."/>
        </authorList>
    </citation>
    <scope>GENOME REANNOTATION</scope>
    <source>
        <strain>cv. Columbia</strain>
    </source>
</reference>
<name>FDL34_ARATH</name>
<gene>
    <name type="ordered locus">At5g44950</name>
    <name type="ORF">K21C13.14</name>
</gene>
<feature type="chain" id="PRO_0000283126" description="Putative F-box/FBD/LRR-repeat protein At5g44950">
    <location>
        <begin position="1"/>
        <end position="438"/>
    </location>
</feature>
<feature type="domain" description="F-box" evidence="1">
    <location>
        <begin position="3"/>
        <end position="49"/>
    </location>
</feature>
<feature type="repeat" description="LRR 1">
    <location>
        <begin position="246"/>
        <end position="275"/>
    </location>
</feature>
<feature type="repeat" description="LRR 2">
    <location>
        <begin position="286"/>
        <end position="310"/>
    </location>
</feature>
<feature type="domain" description="FBD">
    <location>
        <begin position="355"/>
        <end position="407"/>
    </location>
</feature>